<sequence>MRLLILLLLPLVAIAQDDYCFSKDTSRLQTRQFSSKTAYQIVKGTDIDKQYLVPGCQPQKMWIFHRHGTRLPKKSMINKASRVAELRDLIINNYQVARTKPETDALCQTDLIAIKLWKWNSSITPDMEEYLTAQGYEDLRGTAKLYQRYYPTVLTANYNDTYYQFRHTDTQRTTESFKAFAEGLFGSQNAAHPVEIPKQDLLLRPYDYCSSFKNVNYKDEGSEYYKFHQSKLYNDTLADISTRLGFLYTLEEADIKLMYDMCRYEQAWNVDRNSVWCGAFLPEQITVFEYLEDLKYYYGSGYGFPENAHLNCRLVQDLLTHLSNPVSPHVVAHFGHSTGLLTLLTALGIQKDDIKLRADNYDSLTSRRWKSSLIDPFAANFVAVKYDCPADLDREKVVFFLNQQAVQLDWCSVGLCKWSDVLEKYKTIADADCGEYYCRTGGAPSLGSGVGGLLATTLAAMLVYLMH</sequence>
<evidence type="ECO:0000250" key="1">
    <source>
        <dbReference type="UniProtKB" id="Q9UNW1"/>
    </source>
</evidence>
<evidence type="ECO:0000255" key="2"/>
<evidence type="ECO:0000255" key="3">
    <source>
        <dbReference type="PROSITE-ProRule" id="PRU00498"/>
    </source>
</evidence>
<evidence type="ECO:0000269" key="4">
    <source>
    </source>
</evidence>
<evidence type="ECO:0000305" key="5"/>
<evidence type="ECO:0000305" key="6">
    <source>
    </source>
</evidence>
<evidence type="ECO:0000312" key="7">
    <source>
        <dbReference type="EMBL" id="AAD02436.1"/>
    </source>
</evidence>
<evidence type="ECO:0000312" key="8">
    <source>
        <dbReference type="EMBL" id="AAL49048.1"/>
    </source>
</evidence>
<evidence type="ECO:0000312" key="9">
    <source>
        <dbReference type="EMBL" id="AAM12275.1"/>
    </source>
</evidence>
<evidence type="ECO:0000312" key="10">
    <source>
        <dbReference type="FlyBase" id="FBgn0026061"/>
    </source>
</evidence>
<evidence type="ECO:0000312" key="11">
    <source>
        <dbReference type="Proteomes" id="UP000000803"/>
    </source>
</evidence>
<reference evidence="7" key="1">
    <citation type="journal article" date="1999" name="Genomics">
        <title>Multiple inositol polyphosphate phosphatase: evolution as a distinct group within the histidine phosphatase family and chromosomal localization of the human and mouse genes to chromosomes 10q23 and 19.</title>
        <authorList>
            <person name="Chi H."/>
            <person name="Tiller G.E."/>
            <person name="Dasouki M.J."/>
            <person name="Romano P.R."/>
            <person name="Wang J."/>
            <person name="O'keefe R.J."/>
            <person name="Puzas J.E."/>
            <person name="Rosier R.N."/>
            <person name="Reynolds P.R."/>
        </authorList>
    </citation>
    <scope>NUCLEOTIDE SEQUENCE [MRNA]</scope>
</reference>
<reference evidence="11" key="2">
    <citation type="journal article" date="2000" name="Science">
        <title>The genome sequence of Drosophila melanogaster.</title>
        <authorList>
            <person name="Adams M.D."/>
            <person name="Celniker S.E."/>
            <person name="Holt R.A."/>
            <person name="Evans C.A."/>
            <person name="Gocayne J.D."/>
            <person name="Amanatides P.G."/>
            <person name="Scherer S.E."/>
            <person name="Li P.W."/>
            <person name="Hoskins R.A."/>
            <person name="Galle R.F."/>
            <person name="George R.A."/>
            <person name="Lewis S.E."/>
            <person name="Richards S."/>
            <person name="Ashburner M."/>
            <person name="Henderson S.N."/>
            <person name="Sutton G.G."/>
            <person name="Wortman J.R."/>
            <person name="Yandell M.D."/>
            <person name="Zhang Q."/>
            <person name="Chen L.X."/>
            <person name="Brandon R.C."/>
            <person name="Rogers Y.-H.C."/>
            <person name="Blazej R.G."/>
            <person name="Champe M."/>
            <person name="Pfeiffer B.D."/>
            <person name="Wan K.H."/>
            <person name="Doyle C."/>
            <person name="Baxter E.G."/>
            <person name="Helt G."/>
            <person name="Nelson C.R."/>
            <person name="Miklos G.L.G."/>
            <person name="Abril J.F."/>
            <person name="Agbayani A."/>
            <person name="An H.-J."/>
            <person name="Andrews-Pfannkoch C."/>
            <person name="Baldwin D."/>
            <person name="Ballew R.M."/>
            <person name="Basu A."/>
            <person name="Baxendale J."/>
            <person name="Bayraktaroglu L."/>
            <person name="Beasley E.M."/>
            <person name="Beeson K.Y."/>
            <person name="Benos P.V."/>
            <person name="Berman B.P."/>
            <person name="Bhandari D."/>
            <person name="Bolshakov S."/>
            <person name="Borkova D."/>
            <person name="Botchan M.R."/>
            <person name="Bouck J."/>
            <person name="Brokstein P."/>
            <person name="Brottier P."/>
            <person name="Burtis K.C."/>
            <person name="Busam D.A."/>
            <person name="Butler H."/>
            <person name="Cadieu E."/>
            <person name="Center A."/>
            <person name="Chandra I."/>
            <person name="Cherry J.M."/>
            <person name="Cawley S."/>
            <person name="Dahlke C."/>
            <person name="Davenport L.B."/>
            <person name="Davies P."/>
            <person name="de Pablos B."/>
            <person name="Delcher A."/>
            <person name="Deng Z."/>
            <person name="Mays A.D."/>
            <person name="Dew I."/>
            <person name="Dietz S.M."/>
            <person name="Dodson K."/>
            <person name="Doup L.E."/>
            <person name="Downes M."/>
            <person name="Dugan-Rocha S."/>
            <person name="Dunkov B.C."/>
            <person name="Dunn P."/>
            <person name="Durbin K.J."/>
            <person name="Evangelista C.C."/>
            <person name="Ferraz C."/>
            <person name="Ferriera S."/>
            <person name="Fleischmann W."/>
            <person name="Fosler C."/>
            <person name="Gabrielian A.E."/>
            <person name="Garg N.S."/>
            <person name="Gelbart W.M."/>
            <person name="Glasser K."/>
            <person name="Glodek A."/>
            <person name="Gong F."/>
            <person name="Gorrell J.H."/>
            <person name="Gu Z."/>
            <person name="Guan P."/>
            <person name="Harris M."/>
            <person name="Harris N.L."/>
            <person name="Harvey D.A."/>
            <person name="Heiman T.J."/>
            <person name="Hernandez J.R."/>
            <person name="Houck J."/>
            <person name="Hostin D."/>
            <person name="Houston K.A."/>
            <person name="Howland T.J."/>
            <person name="Wei M.-H."/>
            <person name="Ibegwam C."/>
            <person name="Jalali M."/>
            <person name="Kalush F."/>
            <person name="Karpen G.H."/>
            <person name="Ke Z."/>
            <person name="Kennison J.A."/>
            <person name="Ketchum K.A."/>
            <person name="Kimmel B.E."/>
            <person name="Kodira C.D."/>
            <person name="Kraft C.L."/>
            <person name="Kravitz S."/>
            <person name="Kulp D."/>
            <person name="Lai Z."/>
            <person name="Lasko P."/>
            <person name="Lei Y."/>
            <person name="Levitsky A.A."/>
            <person name="Li J.H."/>
            <person name="Li Z."/>
            <person name="Liang Y."/>
            <person name="Lin X."/>
            <person name="Liu X."/>
            <person name="Mattei B."/>
            <person name="McIntosh T.C."/>
            <person name="McLeod M.P."/>
            <person name="McPherson D."/>
            <person name="Merkulov G."/>
            <person name="Milshina N.V."/>
            <person name="Mobarry C."/>
            <person name="Morris J."/>
            <person name="Moshrefi A."/>
            <person name="Mount S.M."/>
            <person name="Moy M."/>
            <person name="Murphy B."/>
            <person name="Murphy L."/>
            <person name="Muzny D.M."/>
            <person name="Nelson D.L."/>
            <person name="Nelson D.R."/>
            <person name="Nelson K.A."/>
            <person name="Nixon K."/>
            <person name="Nusskern D.R."/>
            <person name="Pacleb J.M."/>
            <person name="Palazzolo M."/>
            <person name="Pittman G.S."/>
            <person name="Pan S."/>
            <person name="Pollard J."/>
            <person name="Puri V."/>
            <person name="Reese M.G."/>
            <person name="Reinert K."/>
            <person name="Remington K."/>
            <person name="Saunders R.D.C."/>
            <person name="Scheeler F."/>
            <person name="Shen H."/>
            <person name="Shue B.C."/>
            <person name="Siden-Kiamos I."/>
            <person name="Simpson M."/>
            <person name="Skupski M.P."/>
            <person name="Smith T.J."/>
            <person name="Spier E."/>
            <person name="Spradling A.C."/>
            <person name="Stapleton M."/>
            <person name="Strong R."/>
            <person name="Sun E."/>
            <person name="Svirskas R."/>
            <person name="Tector C."/>
            <person name="Turner R."/>
            <person name="Venter E."/>
            <person name="Wang A.H."/>
            <person name="Wang X."/>
            <person name="Wang Z.-Y."/>
            <person name="Wassarman D.A."/>
            <person name="Weinstock G.M."/>
            <person name="Weissenbach J."/>
            <person name="Williams S.M."/>
            <person name="Woodage T."/>
            <person name="Worley K.C."/>
            <person name="Wu D."/>
            <person name="Yang S."/>
            <person name="Yao Q.A."/>
            <person name="Ye J."/>
            <person name="Yeh R.-F."/>
            <person name="Zaveri J.S."/>
            <person name="Zhan M."/>
            <person name="Zhang G."/>
            <person name="Zhao Q."/>
            <person name="Zheng L."/>
            <person name="Zheng X.H."/>
            <person name="Zhong F.N."/>
            <person name="Zhong W."/>
            <person name="Zhou X."/>
            <person name="Zhu S.C."/>
            <person name="Zhu X."/>
            <person name="Smith H.O."/>
            <person name="Gibbs R.A."/>
            <person name="Myers E.W."/>
            <person name="Rubin G.M."/>
            <person name="Venter J.C."/>
        </authorList>
    </citation>
    <scope>NUCLEOTIDE SEQUENCE [LARGE SCALE GENOMIC DNA]</scope>
    <source>
        <strain evidence="11">Berkeley</strain>
    </source>
</reference>
<reference evidence="11" key="3">
    <citation type="journal article" date="2002" name="Genome Biol.">
        <title>Annotation of the Drosophila melanogaster euchromatic genome: a systematic review.</title>
        <authorList>
            <person name="Misra S."/>
            <person name="Crosby M.A."/>
            <person name="Mungall C.J."/>
            <person name="Matthews B.B."/>
            <person name="Campbell K.S."/>
            <person name="Hradecky P."/>
            <person name="Huang Y."/>
            <person name="Kaminker J.S."/>
            <person name="Millburn G.H."/>
            <person name="Prochnik S.E."/>
            <person name="Smith C.D."/>
            <person name="Tupy J.L."/>
            <person name="Whitfield E.J."/>
            <person name="Bayraktaroglu L."/>
            <person name="Berman B.P."/>
            <person name="Bettencourt B.R."/>
            <person name="Celniker S.E."/>
            <person name="de Grey A.D.N.J."/>
            <person name="Drysdale R.A."/>
            <person name="Harris N.L."/>
            <person name="Richter J."/>
            <person name="Russo S."/>
            <person name="Schroeder A.J."/>
            <person name="Shu S.Q."/>
            <person name="Stapleton M."/>
            <person name="Yamada C."/>
            <person name="Ashburner M."/>
            <person name="Gelbart W.M."/>
            <person name="Rubin G.M."/>
            <person name="Lewis S.E."/>
        </authorList>
    </citation>
    <scope>GENOME REANNOTATION</scope>
    <source>
        <strain evidence="11">Berkeley</strain>
    </source>
</reference>
<reference evidence="8" key="4">
    <citation type="journal article" date="2002" name="Genome Biol.">
        <title>A Drosophila full-length cDNA resource.</title>
        <authorList>
            <person name="Stapleton M."/>
            <person name="Carlson J.W."/>
            <person name="Brokstein P."/>
            <person name="Yu C."/>
            <person name="Champe M."/>
            <person name="George R.A."/>
            <person name="Guarin H."/>
            <person name="Kronmiller B."/>
            <person name="Pacleb J.M."/>
            <person name="Park S."/>
            <person name="Wan K.H."/>
            <person name="Rubin G.M."/>
            <person name="Celniker S.E."/>
        </authorList>
    </citation>
    <scope>NUCLEOTIDE SEQUENCE [LARGE SCALE MRNA]</scope>
    <source>
        <strain evidence="8">Berkeley</strain>
        <tissue evidence="8">Embryo</tissue>
        <tissue evidence="9">Ovary</tissue>
    </source>
</reference>
<reference evidence="5" key="5">
    <citation type="journal article" date="2015" name="Cell Rep.">
        <title>Extracellular Mipp1 activity confers migratory advantage to epithelial cells during collective migration.</title>
        <authorList>
            <person name="Cheng Y.L."/>
            <person name="Andrew D.J."/>
        </authorList>
    </citation>
    <scope>FUNCTION</scope>
    <scope>CATALYTIC ACTIVITY</scope>
    <scope>SUBCELLULAR LOCATION</scope>
    <scope>DEVELOPMENTAL STAGE</scope>
    <scope>INDUCTION</scope>
    <scope>GLYCOSYLATION</scope>
    <scope>ACTIVE SITE</scope>
    <scope>GPI-ANCHOR AT GLY-441</scope>
    <scope>DISRUPTION PHENOTYPE</scope>
    <scope>MUTAGENESIS OF HIS-67 AND 439-ARG--PRO-444</scope>
</reference>
<keyword id="KW-0965">Cell junction</keyword>
<keyword id="KW-1003">Cell membrane</keyword>
<keyword id="KW-0966">Cell projection</keyword>
<keyword id="KW-0217">Developmental protein</keyword>
<keyword id="KW-0325">Glycoprotein</keyword>
<keyword id="KW-0336">GPI-anchor</keyword>
<keyword id="KW-0378">Hydrolase</keyword>
<keyword id="KW-0449">Lipoprotein</keyword>
<keyword id="KW-0472">Membrane</keyword>
<keyword id="KW-1185">Reference proteome</keyword>
<keyword id="KW-0732">Signal</keyword>
<comment type="function">
    <text evidence="1 4">Probable multiple inositol polyphosphate phosphatase that hydrolyzes 1D-myo-inositol 1,3,4,5,6-pentakisphosphate (InsP5[2OH]) and 1D-myo-inositol hexakisphosphate (InsP6) to a range of less phosphorylated inositol phosphates. This regulates the availability of these various small molecule second messengers and metal chelators which control many aspects of cell physiology (PubMed:26628373). May have a dual substrate specificity, and function as a 2,3-bisphosphoglycerate 3-phosphatase hydrolyzing 2,3-bisphosphoglycerate to 2-phosphoglycerate. 2,3-bisphosphoglycerate (BPG) is formed as part of the Rapoport-Luebering glycolytic bypass (By similarity). Has a role in embryonic tracheal development where it localizes to the leading edge of actively migrating branches (PubMed:26628373). In these leading cells, enhances formation and/or maintenance of filopodia which may drive branch migration and elongation by cell-cell intercalation (PubMed:26628373). The function in tracheal morphogenesis is dependent on its inositol polyphosphate phosphatase activity (PubMed:26628373).</text>
</comment>
<comment type="catalytic activity">
    <reaction evidence="1">
        <text>(2R)-2,3-bisphosphoglycerate + H2O = (2R)-2-phosphoglycerate + phosphate</text>
        <dbReference type="Rhea" id="RHEA:27381"/>
        <dbReference type="ChEBI" id="CHEBI:15377"/>
        <dbReference type="ChEBI" id="CHEBI:43474"/>
        <dbReference type="ChEBI" id="CHEBI:58248"/>
        <dbReference type="ChEBI" id="CHEBI:58289"/>
        <dbReference type="EC" id="3.1.3.80"/>
    </reaction>
    <physiologicalReaction direction="left-to-right" evidence="1">
        <dbReference type="Rhea" id="RHEA:27382"/>
    </physiologicalReaction>
</comment>
<comment type="catalytic activity">
    <reaction evidence="4">
        <text>1D-myo-inositol hexakisphosphate + H2O = 1D-myo-inositol 1,2,4,5,6-pentakisphosphate + phosphate</text>
        <dbReference type="Rhea" id="RHEA:16989"/>
        <dbReference type="ChEBI" id="CHEBI:15377"/>
        <dbReference type="ChEBI" id="CHEBI:43474"/>
        <dbReference type="ChEBI" id="CHEBI:57798"/>
        <dbReference type="ChEBI" id="CHEBI:58130"/>
        <dbReference type="EC" id="3.1.3.62"/>
    </reaction>
    <physiologicalReaction direction="left-to-right" evidence="4">
        <dbReference type="Rhea" id="RHEA:16990"/>
    </physiologicalReaction>
</comment>
<comment type="catalytic activity">
    <reaction evidence="1">
        <text>1D-myo-inositol 1,2,4,5,6-pentakisphosphate + H2O = 1D-myo-inositol 1,2,5,6-tetrakisphosphate + phosphate</text>
        <dbReference type="Rhea" id="RHEA:77115"/>
        <dbReference type="ChEBI" id="CHEBI:15377"/>
        <dbReference type="ChEBI" id="CHEBI:43474"/>
        <dbReference type="ChEBI" id="CHEBI:57798"/>
        <dbReference type="ChEBI" id="CHEBI:195535"/>
        <dbReference type="EC" id="3.1.3.62"/>
    </reaction>
    <physiologicalReaction direction="left-to-right" evidence="1">
        <dbReference type="Rhea" id="RHEA:77116"/>
    </physiologicalReaction>
</comment>
<comment type="catalytic activity">
    <reaction evidence="1">
        <text>1D-myo-inositol 1,2,5,6-tetrakisphosphate + H2O = 1D-myo-inositol 1,2,6-trisphosphate + phosphate</text>
        <dbReference type="Rhea" id="RHEA:77119"/>
        <dbReference type="ChEBI" id="CHEBI:15377"/>
        <dbReference type="ChEBI" id="CHEBI:43474"/>
        <dbReference type="ChEBI" id="CHEBI:195535"/>
        <dbReference type="ChEBI" id="CHEBI:195537"/>
        <dbReference type="EC" id="3.1.3.62"/>
    </reaction>
    <physiologicalReaction direction="left-to-right" evidence="1">
        <dbReference type="Rhea" id="RHEA:77120"/>
    </physiologicalReaction>
</comment>
<comment type="subcellular location">
    <subcellularLocation>
        <location evidence="4">Cell membrane</location>
        <topology evidence="4">Lipid-anchor</topology>
        <topology evidence="4">GPI-anchor</topology>
    </subcellularLocation>
    <subcellularLocation>
        <location evidence="4">Apical cell membrane</location>
    </subcellularLocation>
    <subcellularLocation>
        <location evidence="4">Basolateral cell membrane</location>
    </subcellularLocation>
    <subcellularLocation>
        <location evidence="4">Cell projection</location>
        <location evidence="4">Filopodium</location>
    </subcellularLocation>
    <subcellularLocation>
        <location evidence="4">Cell junction</location>
    </subcellularLocation>
    <text evidence="4">Has a dynamic localization pattern during tracheal development. During early tracheal invagination (embryonic stage 10), localizes mainly to the apical cell membrane. During the primary tracheal branching stage (embryonic stage 11), found mainly at the basolateral cell membrane. At later stages (embryonic stage 13-15), also localizes to cell-cell junctions and filopodia.</text>
</comment>
<comment type="developmental stage">
    <text evidence="4">During embryonic stage 10-12, expressed throughout the tracheal primordia. At stages 13-15, expression is lost from the tracheal dorsal trunks (DTs) but is maintained in branches still undergoing active elongation and migration: the dorsal branches (DBs), visceral branches (VBs), lateral trunk branches (LTs) and ganglionic branches (GBs). Notably, expression is enriched at regions of filopodia formation such as the distal tips of the DBs, LTs and GBs.</text>
</comment>
<comment type="induction">
    <text evidence="4">Up-regulated by FGF signaling in the developing trachea.</text>
</comment>
<comment type="PTM">
    <text evidence="4">N-glycosylated.</text>
</comment>
<comment type="disruption phenotype">
    <text evidence="4">Tracheal morphology is grossly normal although some defects are observed. Dorsal trunks (DTs) are significantly elongated, and dorsal branches (DBs) frequently fail to fuse with their contralateral partner. Filopodia number in DBs is reduced.</text>
</comment>
<comment type="similarity">
    <text evidence="5">Belongs to the histidine acid phosphatase family. MINPP1 subfamily.</text>
</comment>
<comment type="sequence caution" evidence="5">
    <conflict type="erroneous initiation">
        <sequence resource="EMBL-CDS" id="AAM12275"/>
    </conflict>
    <text>Truncated N-terminus.</text>
</comment>
<dbReference type="EC" id="3.1.3.62" evidence="4"/>
<dbReference type="EC" id="3.1.3.80" evidence="1"/>
<dbReference type="EMBL" id="AF046913">
    <property type="protein sequence ID" value="AAD02436.1"/>
    <property type="molecule type" value="mRNA"/>
</dbReference>
<dbReference type="EMBL" id="AE014296">
    <property type="protein sequence ID" value="AAF49450.2"/>
    <property type="molecule type" value="Genomic_DNA"/>
</dbReference>
<dbReference type="EMBL" id="AE014296">
    <property type="protein sequence ID" value="AAN11754.1"/>
    <property type="molecule type" value="Genomic_DNA"/>
</dbReference>
<dbReference type="EMBL" id="AE014296">
    <property type="protein sequence ID" value="AHN58107.1"/>
    <property type="molecule type" value="Genomic_DNA"/>
</dbReference>
<dbReference type="EMBL" id="AY071426">
    <property type="protein sequence ID" value="AAL49048.1"/>
    <property type="molecule type" value="mRNA"/>
</dbReference>
<dbReference type="EMBL" id="AY095182">
    <property type="protein sequence ID" value="AAM12275.1"/>
    <property type="status" value="ALT_INIT"/>
    <property type="molecule type" value="mRNA"/>
</dbReference>
<dbReference type="RefSeq" id="NP_001287082.1">
    <property type="nucleotide sequence ID" value="NM_001300153.1"/>
</dbReference>
<dbReference type="RefSeq" id="NP_524109.2">
    <property type="nucleotide sequence ID" value="NM_079385.4"/>
</dbReference>
<dbReference type="RefSeq" id="NP_730177.1">
    <property type="nucleotide sequence ID" value="NM_168672.3"/>
</dbReference>
<dbReference type="SMR" id="Q9VV72"/>
<dbReference type="FunCoup" id="Q9VV72">
    <property type="interactions" value="166"/>
</dbReference>
<dbReference type="STRING" id="7227.FBpp0311799"/>
<dbReference type="GlyCosmos" id="Q9VV72">
    <property type="glycosylation" value="3 sites, No reported glycans"/>
</dbReference>
<dbReference type="GlyGen" id="Q9VV72">
    <property type="glycosylation" value="3 sites"/>
</dbReference>
<dbReference type="PaxDb" id="7227-FBpp0075156"/>
<dbReference type="DNASU" id="39841"/>
<dbReference type="EnsemblMetazoa" id="FBtr0075398">
    <property type="protein sequence ID" value="FBpp0075156"/>
    <property type="gene ID" value="FBgn0026061"/>
</dbReference>
<dbReference type="EnsemblMetazoa" id="FBtr0075399">
    <property type="protein sequence ID" value="FBpp0075157"/>
    <property type="gene ID" value="FBgn0026061"/>
</dbReference>
<dbReference type="EnsemblMetazoa" id="FBtr0345813">
    <property type="protein sequence ID" value="FBpp0311799"/>
    <property type="gene ID" value="FBgn0026061"/>
</dbReference>
<dbReference type="GeneID" id="39841"/>
<dbReference type="KEGG" id="dme:Dmel_CG4123"/>
<dbReference type="UCSC" id="CG4123-RA">
    <property type="organism name" value="d. melanogaster"/>
</dbReference>
<dbReference type="AGR" id="FB:FBgn0026061"/>
<dbReference type="CTD" id="39841"/>
<dbReference type="FlyBase" id="FBgn0026061">
    <property type="gene designation" value="Mipp1"/>
</dbReference>
<dbReference type="VEuPathDB" id="VectorBase:FBgn0026061"/>
<dbReference type="eggNOG" id="KOG1382">
    <property type="taxonomic scope" value="Eukaryota"/>
</dbReference>
<dbReference type="GeneTree" id="ENSGT00390000018409"/>
<dbReference type="HOGENOM" id="CLU_029165_0_0_1"/>
<dbReference type="InParanoid" id="Q9VV72"/>
<dbReference type="OMA" id="SLHSPWC"/>
<dbReference type="OrthoDB" id="6509975at2759"/>
<dbReference type="PhylomeDB" id="Q9VV72"/>
<dbReference type="BioGRID-ORCS" id="39841">
    <property type="hits" value="0 hits in 3 CRISPR screens"/>
</dbReference>
<dbReference type="GenomeRNAi" id="39841"/>
<dbReference type="PRO" id="PR:Q9VV72"/>
<dbReference type="Proteomes" id="UP000000803">
    <property type="component" value="Chromosome 3L"/>
</dbReference>
<dbReference type="Bgee" id="FBgn0026061">
    <property type="expression patterns" value="Expressed in crop (Drosophila) and 143 other cell types or tissues"/>
</dbReference>
<dbReference type="GO" id="GO:0070161">
    <property type="term" value="C:anchoring junction"/>
    <property type="evidence" value="ECO:0007669"/>
    <property type="project" value="UniProtKB-SubCell"/>
</dbReference>
<dbReference type="GO" id="GO:0016324">
    <property type="term" value="C:apical plasma membrane"/>
    <property type="evidence" value="ECO:0007669"/>
    <property type="project" value="UniProtKB-SubCell"/>
</dbReference>
<dbReference type="GO" id="GO:0016323">
    <property type="term" value="C:basolateral plasma membrane"/>
    <property type="evidence" value="ECO:0007669"/>
    <property type="project" value="UniProtKB-SubCell"/>
</dbReference>
<dbReference type="GO" id="GO:0009897">
    <property type="term" value="C:external side of plasma membrane"/>
    <property type="evidence" value="ECO:0000314"/>
    <property type="project" value="FlyBase"/>
</dbReference>
<dbReference type="GO" id="GO:0070062">
    <property type="term" value="C:extracellular exosome"/>
    <property type="evidence" value="ECO:0000250"/>
    <property type="project" value="FlyBase"/>
</dbReference>
<dbReference type="GO" id="GO:0030175">
    <property type="term" value="C:filopodium"/>
    <property type="evidence" value="ECO:0000314"/>
    <property type="project" value="FlyBase"/>
</dbReference>
<dbReference type="GO" id="GO:0005886">
    <property type="term" value="C:plasma membrane"/>
    <property type="evidence" value="ECO:0007005"/>
    <property type="project" value="FlyBase"/>
</dbReference>
<dbReference type="GO" id="GO:0016158">
    <property type="term" value="F:3-phytase activity"/>
    <property type="evidence" value="ECO:0007669"/>
    <property type="project" value="RHEA"/>
</dbReference>
<dbReference type="GO" id="GO:0003993">
    <property type="term" value="F:acid phosphatase activity"/>
    <property type="evidence" value="ECO:0000318"/>
    <property type="project" value="GO_Central"/>
</dbReference>
<dbReference type="GO" id="GO:0034417">
    <property type="term" value="F:bisphosphoglycerate 3-phosphatase activity"/>
    <property type="evidence" value="ECO:0000250"/>
    <property type="project" value="FlyBase"/>
</dbReference>
<dbReference type="GO" id="GO:0052745">
    <property type="term" value="F:inositol phosphate phosphatase activity"/>
    <property type="evidence" value="ECO:0000314"/>
    <property type="project" value="FlyBase"/>
</dbReference>
<dbReference type="GO" id="GO:0004446">
    <property type="term" value="F:inositol-hexakisphosphate phosphatase activity"/>
    <property type="evidence" value="ECO:0007669"/>
    <property type="project" value="UniProtKB-EC"/>
</dbReference>
<dbReference type="GO" id="GO:0007424">
    <property type="term" value="P:open tracheal system development"/>
    <property type="evidence" value="ECO:0000315"/>
    <property type="project" value="FlyBase"/>
</dbReference>
<dbReference type="GO" id="GO:0051491">
    <property type="term" value="P:positive regulation of filopodium assembly"/>
    <property type="evidence" value="ECO:0000315"/>
    <property type="project" value="FlyBase"/>
</dbReference>
<dbReference type="CDD" id="cd07061">
    <property type="entry name" value="HP_HAP_like"/>
    <property type="match status" value="1"/>
</dbReference>
<dbReference type="FunFam" id="3.40.50.1240:FF:000014">
    <property type="entry name" value="Multiple inositol polyphosphate phosphatase 1"/>
    <property type="match status" value="1"/>
</dbReference>
<dbReference type="Gene3D" id="3.40.50.1240">
    <property type="entry name" value="Phosphoglycerate mutase-like"/>
    <property type="match status" value="1"/>
</dbReference>
<dbReference type="InterPro" id="IPR000560">
    <property type="entry name" value="His_Pase_clade-2"/>
</dbReference>
<dbReference type="InterPro" id="IPR029033">
    <property type="entry name" value="His_PPase_superfam"/>
</dbReference>
<dbReference type="InterPro" id="IPR016274">
    <property type="entry name" value="Histidine_acid_Pase_euk"/>
</dbReference>
<dbReference type="PANTHER" id="PTHR20963:SF8">
    <property type="entry name" value="MULTIPLE INOSITOL POLYPHOSPHATE PHOSPHATASE 1"/>
    <property type="match status" value="1"/>
</dbReference>
<dbReference type="PANTHER" id="PTHR20963">
    <property type="entry name" value="MULTIPLE INOSITOL POLYPHOSPHATE PHOSPHATASE-RELATED"/>
    <property type="match status" value="1"/>
</dbReference>
<dbReference type="Pfam" id="PF00328">
    <property type="entry name" value="His_Phos_2"/>
    <property type="match status" value="1"/>
</dbReference>
<dbReference type="PIRSF" id="PIRSF000894">
    <property type="entry name" value="Acid_phosphatase"/>
    <property type="match status" value="1"/>
</dbReference>
<dbReference type="SUPFAM" id="SSF53254">
    <property type="entry name" value="Phosphoglycerate mutase-like"/>
    <property type="match status" value="1"/>
</dbReference>
<protein>
    <recommendedName>
        <fullName evidence="10">Multiple inositol polyphosphate phosphatase 1</fullName>
        <ecNumber evidence="4">3.1.3.62</ecNumber>
    </recommendedName>
    <alternativeName>
        <fullName evidence="1">2,3-bisphosphoglycerate 3-phosphatase</fullName>
        <shortName evidence="1">2,3-BPG phosphatase</shortName>
        <ecNumber evidence="1">3.1.3.80</ecNumber>
    </alternativeName>
</protein>
<proteinExistence type="evidence at protein level"/>
<name>MINP1_DROME</name>
<gene>
    <name evidence="10" type="primary">Mipp1</name>
    <name evidence="10" type="ORF">CG4123</name>
</gene>
<accession>Q9VV72</accession>
<accession>O96421</accession>
<accession>Q8SYN4</accession>
<accession>Q8T3I2</accession>
<feature type="signal peptide" evidence="2">
    <location>
        <begin position="1"/>
        <end position="15"/>
    </location>
</feature>
<feature type="chain" id="PRO_0000437746" description="Multiple inositol polyphosphate phosphatase 1" evidence="5">
    <location>
        <begin position="16"/>
        <end position="441"/>
    </location>
</feature>
<feature type="propeptide" id="PRO_0000437747" description="Removed in mature form" evidence="5">
    <location>
        <begin position="442"/>
        <end position="467"/>
    </location>
</feature>
<feature type="active site" evidence="4">
    <location>
        <position position="67"/>
    </location>
</feature>
<feature type="lipid moiety-binding region" description="GPI-anchor amidated glycine" evidence="6">
    <location>
        <position position="441"/>
    </location>
</feature>
<feature type="glycosylation site" description="N-linked (GlcNAc...) asparagine" evidence="3">
    <location>
        <position position="120"/>
    </location>
</feature>
<feature type="glycosylation site" description="N-linked (GlcNAc...) asparagine" evidence="3">
    <location>
        <position position="159"/>
    </location>
</feature>
<feature type="glycosylation site" description="N-linked (GlcNAc...) asparagine" evidence="3">
    <location>
        <position position="234"/>
    </location>
</feature>
<feature type="mutagenesis site" description="Loss of InsP6 phosphatase activity. Fails to rescue the filopodia formation phenotype of null mutants." evidence="4">
    <original>H</original>
    <variation>A</variation>
    <location>
        <position position="67"/>
    </location>
</feature>
<feature type="mutagenesis site" description="Fails to localize to the cell membrane." evidence="4">
    <location>
        <begin position="439"/>
        <end position="444"/>
    </location>
</feature>
<feature type="sequence conflict" description="In Ref. 1; AAD02436." evidence="5" ref="1">
    <original>C</original>
    <variation>L</variation>
    <location>
        <position position="388"/>
    </location>
</feature>
<organism evidence="11">
    <name type="scientific">Drosophila melanogaster</name>
    <name type="common">Fruit fly</name>
    <dbReference type="NCBI Taxonomy" id="7227"/>
    <lineage>
        <taxon>Eukaryota</taxon>
        <taxon>Metazoa</taxon>
        <taxon>Ecdysozoa</taxon>
        <taxon>Arthropoda</taxon>
        <taxon>Hexapoda</taxon>
        <taxon>Insecta</taxon>
        <taxon>Pterygota</taxon>
        <taxon>Neoptera</taxon>
        <taxon>Endopterygota</taxon>
        <taxon>Diptera</taxon>
        <taxon>Brachycera</taxon>
        <taxon>Muscomorpha</taxon>
        <taxon>Ephydroidea</taxon>
        <taxon>Drosophilidae</taxon>
        <taxon>Drosophila</taxon>
        <taxon>Sophophora</taxon>
    </lineage>
</organism>